<keyword id="KW-0963">Cytoplasm</keyword>
<keyword id="KW-0690">Ribosome biogenesis</keyword>
<name>RBFA_BACAH</name>
<protein>
    <recommendedName>
        <fullName evidence="1">Ribosome-binding factor A</fullName>
    </recommendedName>
</protein>
<organism>
    <name type="scientific">Bacillus thuringiensis (strain Al Hakam)</name>
    <dbReference type="NCBI Taxonomy" id="412694"/>
    <lineage>
        <taxon>Bacteria</taxon>
        <taxon>Bacillati</taxon>
        <taxon>Bacillota</taxon>
        <taxon>Bacilli</taxon>
        <taxon>Bacillales</taxon>
        <taxon>Bacillaceae</taxon>
        <taxon>Bacillus</taxon>
        <taxon>Bacillus cereus group</taxon>
    </lineage>
</organism>
<accession>A0RHI2</accession>
<evidence type="ECO:0000255" key="1">
    <source>
        <dbReference type="HAMAP-Rule" id="MF_00003"/>
    </source>
</evidence>
<feature type="chain" id="PRO_1000000071" description="Ribosome-binding factor A">
    <location>
        <begin position="1"/>
        <end position="118"/>
    </location>
</feature>
<comment type="function">
    <text evidence="1">One of several proteins that assist in the late maturation steps of the functional core of the 30S ribosomal subunit. Associates with free 30S ribosomal subunits (but not with 30S subunits that are part of 70S ribosomes or polysomes). Required for efficient processing of 16S rRNA. May interact with the 5'-terminal helix region of 16S rRNA.</text>
</comment>
<comment type="subunit">
    <text evidence="1">Monomer. Binds 30S ribosomal subunits, but not 50S ribosomal subunits or 70S ribosomes.</text>
</comment>
<comment type="subcellular location">
    <subcellularLocation>
        <location evidence="1">Cytoplasm</location>
    </subcellularLocation>
</comment>
<comment type="similarity">
    <text evidence="1">Belongs to the RbfA family.</text>
</comment>
<reference key="1">
    <citation type="journal article" date="2007" name="J. Bacteriol.">
        <title>The complete genome sequence of Bacillus thuringiensis Al Hakam.</title>
        <authorList>
            <person name="Challacombe J.F."/>
            <person name="Altherr M.R."/>
            <person name="Xie G."/>
            <person name="Bhotika S.S."/>
            <person name="Brown N."/>
            <person name="Bruce D."/>
            <person name="Campbell C.S."/>
            <person name="Campbell M.L."/>
            <person name="Chen J."/>
            <person name="Chertkov O."/>
            <person name="Cleland C."/>
            <person name="Dimitrijevic M."/>
            <person name="Doggett N.A."/>
            <person name="Fawcett J.J."/>
            <person name="Glavina T."/>
            <person name="Goodwin L.A."/>
            <person name="Green L.D."/>
            <person name="Han C.S."/>
            <person name="Hill K.K."/>
            <person name="Hitchcock P."/>
            <person name="Jackson P.J."/>
            <person name="Keim P."/>
            <person name="Kewalramani A.R."/>
            <person name="Longmire J."/>
            <person name="Lucas S."/>
            <person name="Malfatti S."/>
            <person name="Martinez D."/>
            <person name="McMurry K."/>
            <person name="Meincke L.J."/>
            <person name="Misra M."/>
            <person name="Moseman B.L."/>
            <person name="Mundt M."/>
            <person name="Munk A.C."/>
            <person name="Okinaka R.T."/>
            <person name="Parson-Quintana B."/>
            <person name="Reilly L.P."/>
            <person name="Richardson P."/>
            <person name="Robinson D.L."/>
            <person name="Saunders E."/>
            <person name="Tapia R."/>
            <person name="Tesmer J.G."/>
            <person name="Thayer N."/>
            <person name="Thompson L.S."/>
            <person name="Tice H."/>
            <person name="Ticknor L.O."/>
            <person name="Wills P.L."/>
            <person name="Gilna P."/>
            <person name="Brettin T.S."/>
        </authorList>
    </citation>
    <scope>NUCLEOTIDE SEQUENCE [LARGE SCALE GENOMIC DNA]</scope>
    <source>
        <strain>Al Hakam</strain>
    </source>
</reference>
<sequence>MKLRANRVGEQMKKELGDIISRKIKDPRVGFVTVTDVQVSGDLQIATVYISVLGDEEQKENTLKGLAKAKGFIRSEIGQRIRLRKTPEISFEFDESIGYGHRIDTLLHQINKDGKREE</sequence>
<gene>
    <name evidence="1" type="primary">rbfA</name>
    <name type="ordered locus">BALH_3439</name>
</gene>
<proteinExistence type="inferred from homology"/>
<dbReference type="EMBL" id="CP000485">
    <property type="protein sequence ID" value="ABK86675.1"/>
    <property type="molecule type" value="Genomic_DNA"/>
</dbReference>
<dbReference type="RefSeq" id="WP_000776442.1">
    <property type="nucleotide sequence ID" value="NC_008600.1"/>
</dbReference>
<dbReference type="SMR" id="A0RHI2"/>
<dbReference type="KEGG" id="btl:BALH_3439"/>
<dbReference type="HOGENOM" id="CLU_089475_6_3_9"/>
<dbReference type="GO" id="GO:0005829">
    <property type="term" value="C:cytosol"/>
    <property type="evidence" value="ECO:0007669"/>
    <property type="project" value="TreeGrafter"/>
</dbReference>
<dbReference type="GO" id="GO:0043024">
    <property type="term" value="F:ribosomal small subunit binding"/>
    <property type="evidence" value="ECO:0007669"/>
    <property type="project" value="TreeGrafter"/>
</dbReference>
<dbReference type="GO" id="GO:0030490">
    <property type="term" value="P:maturation of SSU-rRNA"/>
    <property type="evidence" value="ECO:0007669"/>
    <property type="project" value="UniProtKB-UniRule"/>
</dbReference>
<dbReference type="FunFam" id="3.30.300.20:FF:000009">
    <property type="entry name" value="Ribosome-binding factor A"/>
    <property type="match status" value="1"/>
</dbReference>
<dbReference type="Gene3D" id="3.30.300.20">
    <property type="match status" value="1"/>
</dbReference>
<dbReference type="HAMAP" id="MF_00003">
    <property type="entry name" value="RbfA"/>
    <property type="match status" value="1"/>
</dbReference>
<dbReference type="InterPro" id="IPR015946">
    <property type="entry name" value="KH_dom-like_a/b"/>
</dbReference>
<dbReference type="InterPro" id="IPR000238">
    <property type="entry name" value="RbfA"/>
</dbReference>
<dbReference type="InterPro" id="IPR023799">
    <property type="entry name" value="RbfA_dom_sf"/>
</dbReference>
<dbReference type="InterPro" id="IPR020053">
    <property type="entry name" value="Ribosome-bd_factorA_CS"/>
</dbReference>
<dbReference type="NCBIfam" id="TIGR00082">
    <property type="entry name" value="rbfA"/>
    <property type="match status" value="1"/>
</dbReference>
<dbReference type="PANTHER" id="PTHR33515">
    <property type="entry name" value="RIBOSOME-BINDING FACTOR A, CHLOROPLASTIC-RELATED"/>
    <property type="match status" value="1"/>
</dbReference>
<dbReference type="PANTHER" id="PTHR33515:SF1">
    <property type="entry name" value="RIBOSOME-BINDING FACTOR A, CHLOROPLASTIC-RELATED"/>
    <property type="match status" value="1"/>
</dbReference>
<dbReference type="Pfam" id="PF02033">
    <property type="entry name" value="RBFA"/>
    <property type="match status" value="1"/>
</dbReference>
<dbReference type="SUPFAM" id="SSF89919">
    <property type="entry name" value="Ribosome-binding factor A, RbfA"/>
    <property type="match status" value="1"/>
</dbReference>
<dbReference type="PROSITE" id="PS01319">
    <property type="entry name" value="RBFA"/>
    <property type="match status" value="1"/>
</dbReference>